<dbReference type="EMBL" id="BC024341">
    <property type="protein sequence ID" value="AAH24341.1"/>
    <property type="molecule type" value="mRNA"/>
</dbReference>
<dbReference type="CCDS" id="CCDS29385.1"/>
<dbReference type="RefSeq" id="NP_080073.1">
    <property type="nucleotide sequence ID" value="NM_025797.4"/>
</dbReference>
<dbReference type="BMRB" id="P56395"/>
<dbReference type="SMR" id="P56395"/>
<dbReference type="BioGRID" id="224948">
    <property type="interactions" value="9"/>
</dbReference>
<dbReference type="FunCoup" id="P56395">
    <property type="interactions" value="2838"/>
</dbReference>
<dbReference type="STRING" id="10090.ENSMUSP00000124480"/>
<dbReference type="GlyGen" id="P56395">
    <property type="glycosylation" value="1 site, 1 O-linked glycan (1 site)"/>
</dbReference>
<dbReference type="iPTMnet" id="P56395"/>
<dbReference type="PhosphoSitePlus" id="P56395"/>
<dbReference type="REPRODUCTION-2DPAGE" id="IPI00230113"/>
<dbReference type="REPRODUCTION-2DPAGE" id="P56395"/>
<dbReference type="CPTAC" id="non-CPTAC-3700"/>
<dbReference type="jPOST" id="P56395"/>
<dbReference type="PaxDb" id="10090-ENSMUSP00000124480"/>
<dbReference type="PeptideAtlas" id="P56395"/>
<dbReference type="ProteomicsDB" id="279251"/>
<dbReference type="Pumba" id="P56395"/>
<dbReference type="TopDownProteomics" id="P56395"/>
<dbReference type="Antibodypedia" id="23308">
    <property type="antibodies" value="357 antibodies from 31 providers"/>
</dbReference>
<dbReference type="DNASU" id="109672"/>
<dbReference type="Ensembl" id="ENSMUST00000160180.9">
    <property type="protein sequence ID" value="ENSMUSP00000124480.2"/>
    <property type="gene ID" value="ENSMUSG00000024646.15"/>
</dbReference>
<dbReference type="GeneID" id="109672"/>
<dbReference type="KEGG" id="mmu:109672"/>
<dbReference type="UCSC" id="uc008fuw.1">
    <property type="organism name" value="mouse"/>
</dbReference>
<dbReference type="AGR" id="MGI:1926952"/>
<dbReference type="CTD" id="1528"/>
<dbReference type="MGI" id="MGI:1926952">
    <property type="gene designation" value="Cyb5a"/>
</dbReference>
<dbReference type="VEuPathDB" id="HostDB:ENSMUSG00000024646"/>
<dbReference type="eggNOG" id="KOG0537">
    <property type="taxonomic scope" value="Eukaryota"/>
</dbReference>
<dbReference type="GeneTree" id="ENSGT00940000156770"/>
<dbReference type="HOGENOM" id="CLU_102602_3_3_1"/>
<dbReference type="InParanoid" id="P56395"/>
<dbReference type="OMA" id="FMFEHKS"/>
<dbReference type="OrthoDB" id="8496at9989"/>
<dbReference type="PhylomeDB" id="P56395"/>
<dbReference type="TreeFam" id="TF314537"/>
<dbReference type="Reactome" id="R-MMU-196836">
    <property type="pathway name" value="Vitamin C (ascorbate) metabolism"/>
</dbReference>
<dbReference type="Reactome" id="R-MMU-9609523">
    <property type="pathway name" value="Insertion of tail-anchored proteins into the endoplasmic reticulum membrane"/>
</dbReference>
<dbReference type="BioGRID-ORCS" id="109672">
    <property type="hits" value="1 hit in 79 CRISPR screens"/>
</dbReference>
<dbReference type="ChiTaRS" id="Cyb5a">
    <property type="organism name" value="mouse"/>
</dbReference>
<dbReference type="PRO" id="PR:P56395"/>
<dbReference type="Proteomes" id="UP000000589">
    <property type="component" value="Chromosome 18"/>
</dbReference>
<dbReference type="RNAct" id="P56395">
    <property type="molecule type" value="protein"/>
</dbReference>
<dbReference type="Bgee" id="ENSMUSG00000024646">
    <property type="expression patterns" value="Expressed in right kidney and 261 other cell types or tissues"/>
</dbReference>
<dbReference type="ExpressionAtlas" id="P56395">
    <property type="expression patterns" value="baseline and differential"/>
</dbReference>
<dbReference type="GO" id="GO:0005829">
    <property type="term" value="C:cytosol"/>
    <property type="evidence" value="ECO:0007669"/>
    <property type="project" value="Ensembl"/>
</dbReference>
<dbReference type="GO" id="GO:0005783">
    <property type="term" value="C:endoplasmic reticulum"/>
    <property type="evidence" value="ECO:0000314"/>
    <property type="project" value="MGI"/>
</dbReference>
<dbReference type="GO" id="GO:0005789">
    <property type="term" value="C:endoplasmic reticulum membrane"/>
    <property type="evidence" value="ECO:0007669"/>
    <property type="project" value="UniProtKB-SubCell"/>
</dbReference>
<dbReference type="GO" id="GO:0016020">
    <property type="term" value="C:membrane"/>
    <property type="evidence" value="ECO:0000266"/>
    <property type="project" value="MGI"/>
</dbReference>
<dbReference type="GO" id="GO:0005739">
    <property type="term" value="C:mitochondrion"/>
    <property type="evidence" value="ECO:0007005"/>
    <property type="project" value="MGI"/>
</dbReference>
<dbReference type="GO" id="GO:0019899">
    <property type="term" value="F:enzyme binding"/>
    <property type="evidence" value="ECO:0007669"/>
    <property type="project" value="Ensembl"/>
</dbReference>
<dbReference type="GO" id="GO:0020037">
    <property type="term" value="F:heme binding"/>
    <property type="evidence" value="ECO:0007669"/>
    <property type="project" value="InterPro"/>
</dbReference>
<dbReference type="GO" id="GO:0046872">
    <property type="term" value="F:metal ion binding"/>
    <property type="evidence" value="ECO:0007669"/>
    <property type="project" value="UniProtKB-KW"/>
</dbReference>
<dbReference type="GO" id="GO:0004768">
    <property type="term" value="F:stearoyl-CoA 9-desaturase activity"/>
    <property type="evidence" value="ECO:0000304"/>
    <property type="project" value="MGI"/>
</dbReference>
<dbReference type="GO" id="GO:0006631">
    <property type="term" value="P:fatty acid metabolic process"/>
    <property type="evidence" value="ECO:0000305"/>
    <property type="project" value="MGI"/>
</dbReference>
<dbReference type="FunFam" id="3.10.120.10:FF:000002">
    <property type="entry name" value="Cytochrome b5 type B"/>
    <property type="match status" value="1"/>
</dbReference>
<dbReference type="Gene3D" id="3.10.120.10">
    <property type="entry name" value="Cytochrome b5-like heme/steroid binding domain"/>
    <property type="match status" value="1"/>
</dbReference>
<dbReference type="InterPro" id="IPR001199">
    <property type="entry name" value="Cyt_B5-like_heme/steroid-bd"/>
</dbReference>
<dbReference type="InterPro" id="IPR036400">
    <property type="entry name" value="Cyt_B5-like_heme/steroid_sf"/>
</dbReference>
<dbReference type="InterPro" id="IPR018506">
    <property type="entry name" value="Cyt_B5_heme-BS"/>
</dbReference>
<dbReference type="InterPro" id="IPR050668">
    <property type="entry name" value="Cytochrome_b5"/>
</dbReference>
<dbReference type="PANTHER" id="PTHR19359">
    <property type="entry name" value="CYTOCHROME B5"/>
    <property type="match status" value="1"/>
</dbReference>
<dbReference type="PANTHER" id="PTHR19359:SF150">
    <property type="entry name" value="CYTOCHROME B5"/>
    <property type="match status" value="1"/>
</dbReference>
<dbReference type="Pfam" id="PF00173">
    <property type="entry name" value="Cyt-b5"/>
    <property type="match status" value="1"/>
</dbReference>
<dbReference type="PRINTS" id="PR00363">
    <property type="entry name" value="CYTOCHROMEB5"/>
</dbReference>
<dbReference type="SMART" id="SM01117">
    <property type="entry name" value="Cyt-b5"/>
    <property type="match status" value="1"/>
</dbReference>
<dbReference type="SUPFAM" id="SSF55856">
    <property type="entry name" value="Cytochrome b5-like heme/steroid binding domain"/>
    <property type="match status" value="1"/>
</dbReference>
<dbReference type="PROSITE" id="PS00191">
    <property type="entry name" value="CYTOCHROME_B5_1"/>
    <property type="match status" value="1"/>
</dbReference>
<dbReference type="PROSITE" id="PS50255">
    <property type="entry name" value="CYTOCHROME_B5_2"/>
    <property type="match status" value="1"/>
</dbReference>
<name>CYB5_MOUSE</name>
<gene>
    <name type="primary">Cyb5a</name>
    <name type="synonym">Cyb5</name>
</gene>
<evidence type="ECO:0000250" key="1"/>
<evidence type="ECO:0000255" key="2"/>
<evidence type="ECO:0000255" key="3">
    <source>
        <dbReference type="PROSITE-ProRule" id="PRU00279"/>
    </source>
</evidence>
<evidence type="ECO:0000269" key="4">
    <source ref="2"/>
</evidence>
<evidence type="ECO:0000305" key="5"/>
<evidence type="ECO:0007744" key="6">
    <source>
    </source>
</evidence>
<evidence type="ECO:0007744" key="7">
    <source>
    </source>
</evidence>
<keyword id="KW-0007">Acetylation</keyword>
<keyword id="KW-0903">Direct protein sequencing</keyword>
<keyword id="KW-0249">Electron transport</keyword>
<keyword id="KW-0256">Endoplasmic reticulum</keyword>
<keyword id="KW-0349">Heme</keyword>
<keyword id="KW-0408">Iron</keyword>
<keyword id="KW-0472">Membrane</keyword>
<keyword id="KW-0479">Metal-binding</keyword>
<keyword id="KW-0492">Microsome</keyword>
<keyword id="KW-1185">Reference proteome</keyword>
<keyword id="KW-0812">Transmembrane</keyword>
<keyword id="KW-1133">Transmembrane helix</keyword>
<keyword id="KW-0813">Transport</keyword>
<protein>
    <recommendedName>
        <fullName>Cytochrome b5</fullName>
    </recommendedName>
</protein>
<reference key="1">
    <citation type="journal article" date="2004" name="Genome Res.">
        <title>The status, quality, and expansion of the NIH full-length cDNA project: the Mammalian Gene Collection (MGC).</title>
        <authorList>
            <consortium name="The MGC Project Team"/>
        </authorList>
    </citation>
    <scope>NUCLEOTIDE SEQUENCE [LARGE SCALE MRNA]</scope>
    <source>
        <strain>FVB/N</strain>
        <tissue>Kidney</tissue>
    </source>
</reference>
<reference key="2">
    <citation type="submission" date="2005-07" db="UniProtKB">
        <authorList>
            <person name="Bienvenut W.V."/>
        </authorList>
    </citation>
    <scope>PROTEIN SEQUENCE OF 2-10; 25-73 AND 78-89</scope>
    <scope>CLEAVAGE OF INITIATOR METHIONINE</scope>
    <scope>ACETYLATION AT ALA-2</scope>
    <scope>IDENTIFICATION BY MASS SPECTROMETRY</scope>
    <source>
        <strain>C57BL/6J</strain>
        <tissue>Liver</tissue>
    </source>
</reference>
<reference key="3">
    <citation type="journal article" date="2010" name="Cell">
        <title>A tissue-specific atlas of mouse protein phosphorylation and expression.</title>
        <authorList>
            <person name="Huttlin E.L."/>
            <person name="Jedrychowski M.P."/>
            <person name="Elias J.E."/>
            <person name="Goswami T."/>
            <person name="Rad R."/>
            <person name="Beausoleil S.A."/>
            <person name="Villen J."/>
            <person name="Haas W."/>
            <person name="Sowa M.E."/>
            <person name="Gygi S.P."/>
        </authorList>
    </citation>
    <scope>IDENTIFICATION BY MASS SPECTROMETRY [LARGE SCALE ANALYSIS]</scope>
    <source>
        <tissue>Brain</tissue>
        <tissue>Brown adipose tissue</tissue>
        <tissue>Heart</tissue>
        <tissue>Kidney</tissue>
        <tissue>Liver</tissue>
        <tissue>Lung</tissue>
        <tissue>Pancreas</tissue>
        <tissue>Spleen</tissue>
        <tissue>Testis</tissue>
    </source>
</reference>
<reference key="4">
    <citation type="journal article" date="2013" name="Mol. Cell">
        <title>SIRT5-mediated lysine desuccinylation impacts diverse metabolic pathways.</title>
        <authorList>
            <person name="Park J."/>
            <person name="Chen Y."/>
            <person name="Tishkoff D.X."/>
            <person name="Peng C."/>
            <person name="Tan M."/>
            <person name="Dai L."/>
            <person name="Xie Z."/>
            <person name="Zhang Y."/>
            <person name="Zwaans B.M."/>
            <person name="Skinner M.E."/>
            <person name="Lombard D.B."/>
            <person name="Zhao Y."/>
        </authorList>
    </citation>
    <scope>ACETYLATION [LARGE SCALE ANALYSIS] AT LYS-19</scope>
    <scope>IDENTIFICATION BY MASS SPECTROMETRY [LARGE SCALE ANALYSIS]</scope>
    <source>
        <tissue>Embryonic fibroblast</tissue>
    </source>
</reference>
<reference key="5">
    <citation type="journal article" date="2013" name="Proc. Natl. Acad. Sci. U.S.A.">
        <title>Label-free quantitative proteomics of the lysine acetylome in mitochondria identifies substrates of SIRT3 in metabolic pathways.</title>
        <authorList>
            <person name="Rardin M.J."/>
            <person name="Newman J.C."/>
            <person name="Held J.M."/>
            <person name="Cusack M.P."/>
            <person name="Sorensen D.J."/>
            <person name="Li B."/>
            <person name="Schilling B."/>
            <person name="Mooney S.D."/>
            <person name="Kahn C.R."/>
            <person name="Verdin E."/>
            <person name="Gibson B.W."/>
        </authorList>
    </citation>
    <scope>ACETYLATION [LARGE SCALE ANALYSIS] AT LYS-7; LYS-10 AND LYS-19</scope>
    <scope>IDENTIFICATION BY MASS SPECTROMETRY [LARGE SCALE ANALYSIS]</scope>
    <source>
        <tissue>Liver</tissue>
    </source>
</reference>
<sequence>MAGQSDKDVKYYTLEEIQKHKDSKSTWVILHHKVYDLTKFLEEHPGGEEVLREQAGGDATENFEDVGHSTDARELSKTYIIGELHPDDRSKIAKPSDTLITTVESNSSWWTNWVIPAISALAVALMYRLYMAED</sequence>
<organism>
    <name type="scientific">Mus musculus</name>
    <name type="common">Mouse</name>
    <dbReference type="NCBI Taxonomy" id="10090"/>
    <lineage>
        <taxon>Eukaryota</taxon>
        <taxon>Metazoa</taxon>
        <taxon>Chordata</taxon>
        <taxon>Craniata</taxon>
        <taxon>Vertebrata</taxon>
        <taxon>Euteleostomi</taxon>
        <taxon>Mammalia</taxon>
        <taxon>Eutheria</taxon>
        <taxon>Euarchontoglires</taxon>
        <taxon>Glires</taxon>
        <taxon>Rodentia</taxon>
        <taxon>Myomorpha</taxon>
        <taxon>Muroidea</taxon>
        <taxon>Muridae</taxon>
        <taxon>Murinae</taxon>
        <taxon>Mus</taxon>
        <taxon>Mus</taxon>
    </lineage>
</organism>
<accession>P56395</accession>
<proteinExistence type="evidence at protein level"/>
<feature type="initiator methionine" description="Removed" evidence="4">
    <location>
        <position position="1"/>
    </location>
</feature>
<feature type="chain" id="PRO_0000166011" description="Cytochrome b5">
    <location>
        <begin position="2"/>
        <end position="134"/>
    </location>
</feature>
<feature type="transmembrane region" description="Helical" evidence="2">
    <location>
        <begin position="109"/>
        <end position="131"/>
    </location>
</feature>
<feature type="domain" description="Cytochrome b5 heme-binding" evidence="3">
    <location>
        <begin position="9"/>
        <end position="85"/>
    </location>
</feature>
<feature type="binding site" description="axial binding residue" evidence="3">
    <location>
        <position position="44"/>
    </location>
    <ligand>
        <name>heme</name>
        <dbReference type="ChEBI" id="CHEBI:30413"/>
    </ligand>
    <ligandPart>
        <name>Fe</name>
        <dbReference type="ChEBI" id="CHEBI:18248"/>
    </ligandPart>
</feature>
<feature type="binding site" description="axial binding residue" evidence="3">
    <location>
        <position position="68"/>
    </location>
    <ligand>
        <name>heme</name>
        <dbReference type="ChEBI" id="CHEBI:30413"/>
    </ligand>
    <ligandPart>
        <name>Fe</name>
        <dbReference type="ChEBI" id="CHEBI:18248"/>
    </ligandPart>
</feature>
<feature type="modified residue" description="N-acetylalanine" evidence="4">
    <location>
        <position position="2"/>
    </location>
</feature>
<feature type="modified residue" description="N6-acetyllysine" evidence="6">
    <location>
        <position position="7"/>
    </location>
</feature>
<feature type="modified residue" description="N6-acetyllysine" evidence="6">
    <location>
        <position position="10"/>
    </location>
</feature>
<feature type="modified residue" description="N6-acetyllysine" evidence="6 7">
    <location>
        <position position="19"/>
    </location>
</feature>
<comment type="function">
    <text>Cytochrome b5 is a membrane-bound hemoprotein functioning as an electron carrier for several membrane-bound oxygenases. It is also involved in several steps of the sterol biosynthesis pathway, particularly in the C-5 double bond introduction during the C-5 desaturation.</text>
</comment>
<comment type="subcellular location">
    <subcellularLocation>
        <location evidence="1">Endoplasmic reticulum membrane</location>
        <topology evidence="1">Single-pass membrane protein</topology>
        <orientation evidence="1">Cytoplasmic side</orientation>
    </subcellularLocation>
    <subcellularLocation>
        <location evidence="1">Microsome membrane</location>
        <topology evidence="1">Single-pass membrane protein</topology>
        <orientation evidence="1">Cytoplasmic side</orientation>
    </subcellularLocation>
</comment>
<comment type="similarity">
    <text evidence="5">Belongs to the cytochrome b5 family.</text>
</comment>